<accession>Q9BPZ2</accession>
<accession>Q7Z2M0</accession>
<name>SPI2B_HUMAN</name>
<evidence type="ECO:0000250" key="1">
    <source>
        <dbReference type="UniProtKB" id="Q9Y657"/>
    </source>
</evidence>
<evidence type="ECO:0000255" key="2"/>
<evidence type="ECO:0000256" key="3">
    <source>
        <dbReference type="SAM" id="MobiDB-lite"/>
    </source>
</evidence>
<evidence type="ECO:0000269" key="4">
    <source>
    </source>
</evidence>
<evidence type="ECO:0000269" key="5">
    <source>
    </source>
</evidence>
<evidence type="ECO:0000305" key="6"/>
<evidence type="ECO:0007829" key="7">
    <source>
        <dbReference type="PDB" id="5LUG"/>
    </source>
</evidence>
<sequence length="258" mass="29158">MKTPNAQEAEGQQTRAAAGRATGSANMTKKKVSQKKQRGRPSSQPRRNIVGCRISHGWKEGDEPITQWKGTVLDQVPINPSLYLVKYDGIDCVYGLELHRDERVLSLKILSDRVASSHISDANLANTIIGKAVEHMFEGEHGSKDEWRGMVLAQAPIMKAWFYITYEKDPVLYMYQLLDDYKEGDLRIMPESSESPPTEREPGGVVDGLIGKHVEYTKEDGSKRIGMVIHQVEAKPSVYFIKFDDDFHIYVYDLVKKS</sequence>
<protein>
    <recommendedName>
        <fullName>Spindlin-2B</fullName>
    </recommendedName>
    <alternativeName>
        <fullName>Spindlin-like protein 2B</fullName>
        <shortName>SPIN-2</shortName>
        <shortName>SPIN-2B</shortName>
    </alternativeName>
</protein>
<gene>
    <name type="primary">SPIN2B</name>
    <name type="synonym">SPIN2</name>
</gene>
<dbReference type="EMBL" id="AF356353">
    <property type="protein sequence ID" value="AAK37566.1"/>
    <property type="molecule type" value="mRNA"/>
</dbReference>
<dbReference type="EMBL" id="AL022157">
    <property type="status" value="NOT_ANNOTATED_CDS"/>
    <property type="molecule type" value="Genomic_DNA"/>
</dbReference>
<dbReference type="EMBL" id="BC000044">
    <property type="protein sequence ID" value="AAH00044.1"/>
    <property type="molecule type" value="mRNA"/>
</dbReference>
<dbReference type="EMBL" id="BC071974">
    <property type="protein sequence ID" value="AAH71974.1"/>
    <property type="molecule type" value="mRNA"/>
</dbReference>
<dbReference type="CCDS" id="CCDS35311.1"/>
<dbReference type="RefSeq" id="NP_001006682.1">
    <property type="nucleotide sequence ID" value="NM_001006681.2"/>
</dbReference>
<dbReference type="RefSeq" id="NP_001006683.1">
    <property type="nucleotide sequence ID" value="NM_001006682.2"/>
</dbReference>
<dbReference type="RefSeq" id="NP_001006684.1">
    <property type="nucleotide sequence ID" value="NM_001006683.2"/>
</dbReference>
<dbReference type="RefSeq" id="XP_005262066.2">
    <property type="nucleotide sequence ID" value="XM_005262009.4"/>
</dbReference>
<dbReference type="RefSeq" id="XP_005262067.1">
    <property type="nucleotide sequence ID" value="XM_005262010.3"/>
</dbReference>
<dbReference type="RefSeq" id="XP_011529090.1">
    <property type="nucleotide sequence ID" value="XM_011530788.4"/>
</dbReference>
<dbReference type="RefSeq" id="XP_016885041.1">
    <property type="nucleotide sequence ID" value="XM_017029552.3"/>
</dbReference>
<dbReference type="RefSeq" id="XP_054183099.1">
    <property type="nucleotide sequence ID" value="XM_054327124.1"/>
</dbReference>
<dbReference type="RefSeq" id="XP_054183100.1">
    <property type="nucleotide sequence ID" value="XM_054327125.1"/>
</dbReference>
<dbReference type="RefSeq" id="XP_054183101.1">
    <property type="nucleotide sequence ID" value="XM_054327126.1"/>
</dbReference>
<dbReference type="PDB" id="5LUG">
    <property type="method" value="X-ray"/>
    <property type="resolution" value="1.70 A"/>
    <property type="chains" value="A/B/C/D=44-258"/>
</dbReference>
<dbReference type="PDBsum" id="5LUG"/>
<dbReference type="SMR" id="Q9BPZ2"/>
<dbReference type="BioGRID" id="138877">
    <property type="interactions" value="50"/>
</dbReference>
<dbReference type="FunCoup" id="Q9BPZ2">
    <property type="interactions" value="405"/>
</dbReference>
<dbReference type="IntAct" id="Q9BPZ2">
    <property type="interactions" value="24"/>
</dbReference>
<dbReference type="STRING" id="9606.ENSP00000335008"/>
<dbReference type="BindingDB" id="Q9BPZ2"/>
<dbReference type="ChEMBL" id="CHEMBL4523440"/>
<dbReference type="GlyGen" id="Q9BPZ2">
    <property type="glycosylation" value="1 site, 1 O-linked glycan (1 site)"/>
</dbReference>
<dbReference type="iPTMnet" id="Q9BPZ2"/>
<dbReference type="PhosphoSitePlus" id="Q9BPZ2"/>
<dbReference type="BioMuta" id="SPIN2B"/>
<dbReference type="DMDM" id="23822181"/>
<dbReference type="jPOST" id="Q9BPZ2"/>
<dbReference type="MassIVE" id="Q9BPZ2"/>
<dbReference type="PaxDb" id="9606-ENSP00000335008"/>
<dbReference type="PeptideAtlas" id="Q9BPZ2"/>
<dbReference type="ProteomicsDB" id="78597"/>
<dbReference type="Pumba" id="Q9BPZ2"/>
<dbReference type="Antibodypedia" id="26988">
    <property type="antibodies" value="81 antibodies from 18 providers"/>
</dbReference>
<dbReference type="DNASU" id="474343"/>
<dbReference type="Ensembl" id="ENST00000275988.5">
    <property type="protein sequence ID" value="ENSP00000275988.5"/>
    <property type="gene ID" value="ENSG00000186787.10"/>
</dbReference>
<dbReference type="Ensembl" id="ENST00000333933.3">
    <property type="protein sequence ID" value="ENSP00000335008.3"/>
    <property type="gene ID" value="ENSG00000186787.10"/>
</dbReference>
<dbReference type="Ensembl" id="ENST00000434397.3">
    <property type="protein sequence ID" value="ENSP00000404314.2"/>
    <property type="gene ID" value="ENSG00000186787.10"/>
</dbReference>
<dbReference type="GeneID" id="474343"/>
<dbReference type="KEGG" id="hsa:474343"/>
<dbReference type="MANE-Select" id="ENST00000434397.3">
    <property type="protein sequence ID" value="ENSP00000404314.2"/>
    <property type="RefSeq nucleotide sequence ID" value="NM_001006681.2"/>
    <property type="RefSeq protein sequence ID" value="NP_001006682.1"/>
</dbReference>
<dbReference type="UCSC" id="uc004duy.5">
    <property type="organism name" value="human"/>
</dbReference>
<dbReference type="AGR" id="HGNC:33147"/>
<dbReference type="CTD" id="474343"/>
<dbReference type="GeneCards" id="SPIN2B"/>
<dbReference type="HGNC" id="HGNC:33147">
    <property type="gene designation" value="SPIN2B"/>
</dbReference>
<dbReference type="HPA" id="ENSG00000186787">
    <property type="expression patterns" value="Low tissue specificity"/>
</dbReference>
<dbReference type="MIM" id="300517">
    <property type="type" value="gene"/>
</dbReference>
<dbReference type="neXtProt" id="NX_Q9BPZ2"/>
<dbReference type="PharmGKB" id="PA162404530"/>
<dbReference type="VEuPathDB" id="HostDB:ENSG00000186787"/>
<dbReference type="eggNOG" id="ENOG502QRYD">
    <property type="taxonomic scope" value="Eukaryota"/>
</dbReference>
<dbReference type="GeneTree" id="ENSGT00950000182925"/>
<dbReference type="HOGENOM" id="CLU_068595_0_0_1"/>
<dbReference type="InParanoid" id="Q9BPZ2"/>
<dbReference type="OMA" id="ECGELHE"/>
<dbReference type="OrthoDB" id="9522941at2759"/>
<dbReference type="PAN-GO" id="Q9BPZ2">
    <property type="GO annotations" value="4 GO annotations based on evolutionary models"/>
</dbReference>
<dbReference type="PhylomeDB" id="Q9BPZ2"/>
<dbReference type="TreeFam" id="TF332665"/>
<dbReference type="PathwayCommons" id="Q9BPZ2"/>
<dbReference type="SignaLink" id="Q9BPZ2"/>
<dbReference type="BioGRID-ORCS" id="474343">
    <property type="hits" value="3 hits in 676 CRISPR screens"/>
</dbReference>
<dbReference type="GenomeRNAi" id="474343"/>
<dbReference type="Pharos" id="Q9BPZ2">
    <property type="development level" value="Tchem"/>
</dbReference>
<dbReference type="PRO" id="PR:Q9BPZ2"/>
<dbReference type="Proteomes" id="UP000005640">
    <property type="component" value="Chromosome X"/>
</dbReference>
<dbReference type="RNAct" id="Q9BPZ2">
    <property type="molecule type" value="protein"/>
</dbReference>
<dbReference type="Bgee" id="ENSG00000186787">
    <property type="expression patterns" value="Expressed in primordial germ cell in gonad and 99 other cell types or tissues"/>
</dbReference>
<dbReference type="ExpressionAtlas" id="Q9BPZ2">
    <property type="expression patterns" value="baseline and differential"/>
</dbReference>
<dbReference type="GO" id="GO:0005829">
    <property type="term" value="C:cytosol"/>
    <property type="evidence" value="ECO:0000314"/>
    <property type="project" value="HPA"/>
</dbReference>
<dbReference type="GO" id="GO:0005654">
    <property type="term" value="C:nucleoplasm"/>
    <property type="evidence" value="ECO:0000314"/>
    <property type="project" value="HPA"/>
</dbReference>
<dbReference type="GO" id="GO:0140002">
    <property type="term" value="F:histone H3K4me3 reader activity"/>
    <property type="evidence" value="ECO:0000314"/>
    <property type="project" value="UniProtKB"/>
</dbReference>
<dbReference type="GO" id="GO:0035064">
    <property type="term" value="F:methylated histone binding"/>
    <property type="evidence" value="ECO:0000318"/>
    <property type="project" value="GO_Central"/>
</dbReference>
<dbReference type="GO" id="GO:0006915">
    <property type="term" value="P:apoptotic process"/>
    <property type="evidence" value="ECO:0007669"/>
    <property type="project" value="UniProtKB-KW"/>
</dbReference>
<dbReference type="GO" id="GO:0007276">
    <property type="term" value="P:gamete generation"/>
    <property type="evidence" value="ECO:0007669"/>
    <property type="project" value="InterPro"/>
</dbReference>
<dbReference type="GO" id="GO:0006355">
    <property type="term" value="P:regulation of DNA-templated transcription"/>
    <property type="evidence" value="ECO:0000318"/>
    <property type="project" value="GO_Central"/>
</dbReference>
<dbReference type="FunFam" id="2.80.10.70:FF:000001">
    <property type="entry name" value="Spindlin 1"/>
    <property type="match status" value="1"/>
</dbReference>
<dbReference type="Gene3D" id="2.80.10.70">
    <property type="entry name" value="Spindlin/Ssty"/>
    <property type="match status" value="1"/>
</dbReference>
<dbReference type="InterPro" id="IPR003671">
    <property type="entry name" value="SPIN/Ssty"/>
</dbReference>
<dbReference type="InterPro" id="IPR042567">
    <property type="entry name" value="SPIN/Ssty_sf"/>
</dbReference>
<dbReference type="PANTHER" id="PTHR10405">
    <property type="entry name" value="SPINDLIN"/>
    <property type="match status" value="1"/>
</dbReference>
<dbReference type="Pfam" id="PF02513">
    <property type="entry name" value="Spin-Ssty"/>
    <property type="match status" value="3"/>
</dbReference>
<reference key="1">
    <citation type="journal article" date="2002" name="Leukemia">
        <title>Functional cloning of SPIN-2, a nuclear anti-apoptotic protein with roles in cell cycle progression.</title>
        <authorList>
            <person name="Fletcher B.S."/>
            <person name="Dragstedt C."/>
            <person name="Notterpek L."/>
            <person name="Nolan G.P."/>
        </authorList>
    </citation>
    <scope>NUCLEOTIDE SEQUENCE [MRNA]</scope>
    <scope>FUNCTION</scope>
    <scope>SUBCELLULAR LOCATION</scope>
</reference>
<reference key="2">
    <citation type="journal article" date="2005" name="Nature">
        <title>The DNA sequence of the human X chromosome.</title>
        <authorList>
            <person name="Ross M.T."/>
            <person name="Grafham D.V."/>
            <person name="Coffey A.J."/>
            <person name="Scherer S."/>
            <person name="McLay K."/>
            <person name="Muzny D."/>
            <person name="Platzer M."/>
            <person name="Howell G.R."/>
            <person name="Burrows C."/>
            <person name="Bird C.P."/>
            <person name="Frankish A."/>
            <person name="Lovell F.L."/>
            <person name="Howe K.L."/>
            <person name="Ashurst J.L."/>
            <person name="Fulton R.S."/>
            <person name="Sudbrak R."/>
            <person name="Wen G."/>
            <person name="Jones M.C."/>
            <person name="Hurles M.E."/>
            <person name="Andrews T.D."/>
            <person name="Scott C.E."/>
            <person name="Searle S."/>
            <person name="Ramser J."/>
            <person name="Whittaker A."/>
            <person name="Deadman R."/>
            <person name="Carter N.P."/>
            <person name="Hunt S.E."/>
            <person name="Chen R."/>
            <person name="Cree A."/>
            <person name="Gunaratne P."/>
            <person name="Havlak P."/>
            <person name="Hodgson A."/>
            <person name="Metzker M.L."/>
            <person name="Richards S."/>
            <person name="Scott G."/>
            <person name="Steffen D."/>
            <person name="Sodergren E."/>
            <person name="Wheeler D.A."/>
            <person name="Worley K.C."/>
            <person name="Ainscough R."/>
            <person name="Ambrose K.D."/>
            <person name="Ansari-Lari M.A."/>
            <person name="Aradhya S."/>
            <person name="Ashwell R.I."/>
            <person name="Babbage A.K."/>
            <person name="Bagguley C.L."/>
            <person name="Ballabio A."/>
            <person name="Banerjee R."/>
            <person name="Barker G.E."/>
            <person name="Barlow K.F."/>
            <person name="Barrett I.P."/>
            <person name="Bates K.N."/>
            <person name="Beare D.M."/>
            <person name="Beasley H."/>
            <person name="Beasley O."/>
            <person name="Beck A."/>
            <person name="Bethel G."/>
            <person name="Blechschmidt K."/>
            <person name="Brady N."/>
            <person name="Bray-Allen S."/>
            <person name="Bridgeman A.M."/>
            <person name="Brown A.J."/>
            <person name="Brown M.J."/>
            <person name="Bonnin D."/>
            <person name="Bruford E.A."/>
            <person name="Buhay C."/>
            <person name="Burch P."/>
            <person name="Burford D."/>
            <person name="Burgess J."/>
            <person name="Burrill W."/>
            <person name="Burton J."/>
            <person name="Bye J.M."/>
            <person name="Carder C."/>
            <person name="Carrel L."/>
            <person name="Chako J."/>
            <person name="Chapman J.C."/>
            <person name="Chavez D."/>
            <person name="Chen E."/>
            <person name="Chen G."/>
            <person name="Chen Y."/>
            <person name="Chen Z."/>
            <person name="Chinault C."/>
            <person name="Ciccodicola A."/>
            <person name="Clark S.Y."/>
            <person name="Clarke G."/>
            <person name="Clee C.M."/>
            <person name="Clegg S."/>
            <person name="Clerc-Blankenburg K."/>
            <person name="Clifford K."/>
            <person name="Cobley V."/>
            <person name="Cole C.G."/>
            <person name="Conquer J.S."/>
            <person name="Corby N."/>
            <person name="Connor R.E."/>
            <person name="David R."/>
            <person name="Davies J."/>
            <person name="Davis C."/>
            <person name="Davis J."/>
            <person name="Delgado O."/>
            <person name="Deshazo D."/>
            <person name="Dhami P."/>
            <person name="Ding Y."/>
            <person name="Dinh H."/>
            <person name="Dodsworth S."/>
            <person name="Draper H."/>
            <person name="Dugan-Rocha S."/>
            <person name="Dunham A."/>
            <person name="Dunn M."/>
            <person name="Durbin K.J."/>
            <person name="Dutta I."/>
            <person name="Eades T."/>
            <person name="Ellwood M."/>
            <person name="Emery-Cohen A."/>
            <person name="Errington H."/>
            <person name="Evans K.L."/>
            <person name="Faulkner L."/>
            <person name="Francis F."/>
            <person name="Frankland J."/>
            <person name="Fraser A.E."/>
            <person name="Galgoczy P."/>
            <person name="Gilbert J."/>
            <person name="Gill R."/>
            <person name="Gloeckner G."/>
            <person name="Gregory S.G."/>
            <person name="Gribble S."/>
            <person name="Griffiths C."/>
            <person name="Grocock R."/>
            <person name="Gu Y."/>
            <person name="Gwilliam R."/>
            <person name="Hamilton C."/>
            <person name="Hart E.A."/>
            <person name="Hawes A."/>
            <person name="Heath P.D."/>
            <person name="Heitmann K."/>
            <person name="Hennig S."/>
            <person name="Hernandez J."/>
            <person name="Hinzmann B."/>
            <person name="Ho S."/>
            <person name="Hoffs M."/>
            <person name="Howden P.J."/>
            <person name="Huckle E.J."/>
            <person name="Hume J."/>
            <person name="Hunt P.J."/>
            <person name="Hunt A.R."/>
            <person name="Isherwood J."/>
            <person name="Jacob L."/>
            <person name="Johnson D."/>
            <person name="Jones S."/>
            <person name="de Jong P.J."/>
            <person name="Joseph S.S."/>
            <person name="Keenan S."/>
            <person name="Kelly S."/>
            <person name="Kershaw J.K."/>
            <person name="Khan Z."/>
            <person name="Kioschis P."/>
            <person name="Klages S."/>
            <person name="Knights A.J."/>
            <person name="Kosiura A."/>
            <person name="Kovar-Smith C."/>
            <person name="Laird G.K."/>
            <person name="Langford C."/>
            <person name="Lawlor S."/>
            <person name="Leversha M."/>
            <person name="Lewis L."/>
            <person name="Liu W."/>
            <person name="Lloyd C."/>
            <person name="Lloyd D.M."/>
            <person name="Loulseged H."/>
            <person name="Loveland J.E."/>
            <person name="Lovell J.D."/>
            <person name="Lozado R."/>
            <person name="Lu J."/>
            <person name="Lyne R."/>
            <person name="Ma J."/>
            <person name="Maheshwari M."/>
            <person name="Matthews L.H."/>
            <person name="McDowall J."/>
            <person name="McLaren S."/>
            <person name="McMurray A."/>
            <person name="Meidl P."/>
            <person name="Meitinger T."/>
            <person name="Milne S."/>
            <person name="Miner G."/>
            <person name="Mistry S.L."/>
            <person name="Morgan M."/>
            <person name="Morris S."/>
            <person name="Mueller I."/>
            <person name="Mullikin J.C."/>
            <person name="Nguyen N."/>
            <person name="Nordsiek G."/>
            <person name="Nyakatura G."/>
            <person name="O'dell C.N."/>
            <person name="Okwuonu G."/>
            <person name="Palmer S."/>
            <person name="Pandian R."/>
            <person name="Parker D."/>
            <person name="Parrish J."/>
            <person name="Pasternak S."/>
            <person name="Patel D."/>
            <person name="Pearce A.V."/>
            <person name="Pearson D.M."/>
            <person name="Pelan S.E."/>
            <person name="Perez L."/>
            <person name="Porter K.M."/>
            <person name="Ramsey Y."/>
            <person name="Reichwald K."/>
            <person name="Rhodes S."/>
            <person name="Ridler K.A."/>
            <person name="Schlessinger D."/>
            <person name="Schueler M.G."/>
            <person name="Sehra H.K."/>
            <person name="Shaw-Smith C."/>
            <person name="Shen H."/>
            <person name="Sheridan E.M."/>
            <person name="Shownkeen R."/>
            <person name="Skuce C.D."/>
            <person name="Smith M.L."/>
            <person name="Sotheran E.C."/>
            <person name="Steingruber H.E."/>
            <person name="Steward C.A."/>
            <person name="Storey R."/>
            <person name="Swann R.M."/>
            <person name="Swarbreck D."/>
            <person name="Tabor P.E."/>
            <person name="Taudien S."/>
            <person name="Taylor T."/>
            <person name="Teague B."/>
            <person name="Thomas K."/>
            <person name="Thorpe A."/>
            <person name="Timms K."/>
            <person name="Tracey A."/>
            <person name="Trevanion S."/>
            <person name="Tromans A.C."/>
            <person name="d'Urso M."/>
            <person name="Verduzco D."/>
            <person name="Villasana D."/>
            <person name="Waldron L."/>
            <person name="Wall M."/>
            <person name="Wang Q."/>
            <person name="Warren J."/>
            <person name="Warry G.L."/>
            <person name="Wei X."/>
            <person name="West A."/>
            <person name="Whitehead S.L."/>
            <person name="Whiteley M.N."/>
            <person name="Wilkinson J.E."/>
            <person name="Willey D.L."/>
            <person name="Williams G."/>
            <person name="Williams L."/>
            <person name="Williamson A."/>
            <person name="Williamson H."/>
            <person name="Wilming L."/>
            <person name="Woodmansey R.L."/>
            <person name="Wray P.W."/>
            <person name="Yen J."/>
            <person name="Zhang J."/>
            <person name="Zhou J."/>
            <person name="Zoghbi H."/>
            <person name="Zorilla S."/>
            <person name="Buck D."/>
            <person name="Reinhardt R."/>
            <person name="Poustka A."/>
            <person name="Rosenthal A."/>
            <person name="Lehrach H."/>
            <person name="Meindl A."/>
            <person name="Minx P.J."/>
            <person name="Hillier L.W."/>
            <person name="Willard H.F."/>
            <person name="Wilson R.K."/>
            <person name="Waterston R.H."/>
            <person name="Rice C.M."/>
            <person name="Vaudin M."/>
            <person name="Coulson A."/>
            <person name="Nelson D.L."/>
            <person name="Weinstock G."/>
            <person name="Sulston J.E."/>
            <person name="Durbin R.M."/>
            <person name="Hubbard T."/>
            <person name="Gibbs R.A."/>
            <person name="Beck S."/>
            <person name="Rogers J."/>
            <person name="Bentley D.R."/>
        </authorList>
    </citation>
    <scope>NUCLEOTIDE SEQUENCE [LARGE SCALE GENOMIC DNA]</scope>
</reference>
<reference key="3">
    <citation type="journal article" date="2004" name="Genome Res.">
        <title>The status, quality, and expansion of the NIH full-length cDNA project: the Mammalian Gene Collection (MGC).</title>
        <authorList>
            <consortium name="The MGC Project Team"/>
        </authorList>
    </citation>
    <scope>NUCLEOTIDE SEQUENCE [LARGE SCALE MRNA]</scope>
    <source>
        <tissue>Mammary gland</tissue>
        <tissue>Placenta</tissue>
    </source>
</reference>
<reference key="4">
    <citation type="journal article" date="2017" name="J. Biol. Chem.">
        <title>A transcriptional coregulator, SPIN-DOC, attenuates the coactivator activity of Spindlin1.</title>
        <authorList>
            <person name="Bae N."/>
            <person name="Gao M."/>
            <person name="Li X."/>
            <person name="Premkumar T."/>
            <person name="Sbardella G."/>
            <person name="Chen J."/>
            <person name="Bedford M.T."/>
        </authorList>
    </citation>
    <scope>FUNCTION</scope>
    <scope>INTERACTION WITH C11ORF84/SPINDOC</scope>
</reference>
<feature type="chain" id="PRO_0000181369" description="Spindlin-2B">
    <location>
        <begin position="1"/>
        <end position="258"/>
    </location>
</feature>
<feature type="region of interest" description="Disordered" evidence="3">
    <location>
        <begin position="1"/>
        <end position="49"/>
    </location>
</feature>
<feature type="region of interest" description="Tudor-like domain 1" evidence="2">
    <location>
        <begin position="50"/>
        <end position="99"/>
    </location>
</feature>
<feature type="region of interest" description="Tudor-like domain 2" evidence="2">
    <location>
        <begin position="129"/>
        <end position="178"/>
    </location>
</feature>
<feature type="region of interest" description="Histone H3K4me3 and H3R8me2a binding" evidence="1">
    <location>
        <position position="138"/>
    </location>
</feature>
<feature type="region of interest" description="Tudor-like domain 3" evidence="2">
    <location>
        <begin position="210"/>
        <end position="255"/>
    </location>
</feature>
<feature type="region of interest" description="Histone H3K4me3 and H3R8me2a binding" evidence="1">
    <location>
        <begin position="246"/>
        <end position="248"/>
    </location>
</feature>
<feature type="compositionally biased region" description="Low complexity" evidence="3">
    <location>
        <begin position="1"/>
        <end position="23"/>
    </location>
</feature>
<feature type="compositionally biased region" description="Basic residues" evidence="3">
    <location>
        <begin position="28"/>
        <end position="39"/>
    </location>
</feature>
<feature type="site" description="Histone H3K4me3 and H3R8me2a binding" evidence="1">
    <location>
        <position position="169"/>
    </location>
</feature>
<feature type="site" description="Histone H3K4me3 and H3R8me2a binding" evidence="1">
    <location>
        <position position="176"/>
    </location>
</feature>
<feature type="site" description="Histone H3K4me3 and H3R8me2a binding" evidence="1">
    <location>
        <position position="180"/>
    </location>
</feature>
<feature type="strand" evidence="7">
    <location>
        <begin position="53"/>
        <end position="58"/>
    </location>
</feature>
<feature type="strand" evidence="7">
    <location>
        <begin position="66"/>
        <end position="75"/>
    </location>
</feature>
<feature type="strand" evidence="7">
    <location>
        <begin position="83"/>
        <end position="87"/>
    </location>
</feature>
<feature type="strand" evidence="7">
    <location>
        <begin position="94"/>
        <end position="96"/>
    </location>
</feature>
<feature type="turn" evidence="7">
    <location>
        <begin position="98"/>
        <end position="100"/>
    </location>
</feature>
<feature type="strand" evidence="7">
    <location>
        <begin position="104"/>
        <end position="110"/>
    </location>
</feature>
<feature type="helix" evidence="7">
    <location>
        <begin position="122"/>
        <end position="128"/>
    </location>
</feature>
<feature type="strand" evidence="7">
    <location>
        <begin position="132"/>
        <end position="138"/>
    </location>
</feature>
<feature type="strand" evidence="7">
    <location>
        <begin position="142"/>
        <end position="154"/>
    </location>
</feature>
<feature type="strand" evidence="7">
    <location>
        <begin position="156"/>
        <end position="158"/>
    </location>
</feature>
<feature type="strand" evidence="7">
    <location>
        <begin position="161"/>
        <end position="166"/>
    </location>
</feature>
<feature type="strand" evidence="7">
    <location>
        <begin position="169"/>
        <end position="175"/>
    </location>
</feature>
<feature type="helix" evidence="7">
    <location>
        <begin position="177"/>
        <end position="182"/>
    </location>
</feature>
<feature type="strand" evidence="7">
    <location>
        <begin position="186"/>
        <end position="188"/>
    </location>
</feature>
<feature type="strand" evidence="7">
    <location>
        <begin position="213"/>
        <end position="217"/>
    </location>
</feature>
<feature type="strand" evidence="7">
    <location>
        <begin position="221"/>
        <end position="231"/>
    </location>
</feature>
<feature type="strand" evidence="7">
    <location>
        <begin position="238"/>
        <end position="243"/>
    </location>
</feature>
<feature type="strand" evidence="7">
    <location>
        <begin position="250"/>
        <end position="253"/>
    </location>
</feature>
<organism>
    <name type="scientific">Homo sapiens</name>
    <name type="common">Human</name>
    <dbReference type="NCBI Taxonomy" id="9606"/>
    <lineage>
        <taxon>Eukaryota</taxon>
        <taxon>Metazoa</taxon>
        <taxon>Chordata</taxon>
        <taxon>Craniata</taxon>
        <taxon>Vertebrata</taxon>
        <taxon>Euteleostomi</taxon>
        <taxon>Mammalia</taxon>
        <taxon>Eutheria</taxon>
        <taxon>Euarchontoglires</taxon>
        <taxon>Primates</taxon>
        <taxon>Haplorrhini</taxon>
        <taxon>Catarrhini</taxon>
        <taxon>Hominidae</taxon>
        <taxon>Homo</taxon>
    </lineage>
</organism>
<keyword id="KW-0002">3D-structure</keyword>
<keyword id="KW-0053">Apoptosis</keyword>
<keyword id="KW-0131">Cell cycle</keyword>
<keyword id="KW-0539">Nucleus</keyword>
<keyword id="KW-1267">Proteomics identification</keyword>
<keyword id="KW-1185">Reference proteome</keyword>
<proteinExistence type="evidence at protein level"/>
<comment type="function">
    <text evidence="4 5">Involved in the regulation of cell cycle progression, this activity is related to the inhibition of apoptosis following the removal of essential growth factors (PubMed:12145692). Exhibits H3K4me3-binding activity (PubMed:29061846).</text>
</comment>
<comment type="subunit">
    <text evidence="5">Interacts with C11orf84/SPINDOC (PubMed:29061846).</text>
</comment>
<comment type="interaction">
    <interactant intactId="EBI-21726245">
        <id>Q9BPZ2</id>
    </interactant>
    <interactant intactId="EBI-21591415">
        <id>P13473-2</id>
        <label>LAMP2</label>
    </interactant>
    <organismsDiffer>false</organismsDiffer>
    <experiments>3</experiments>
</comment>
<comment type="interaction">
    <interactant intactId="EBI-21726245">
        <id>Q9BPZ2</id>
    </interactant>
    <interactant intactId="EBI-2623095">
        <id>Q9Y371</id>
        <label>SH3GLB1</label>
    </interactant>
    <organismsDiffer>false</organismsDiffer>
    <experiments>3</experiments>
</comment>
<comment type="subcellular location">
    <subcellularLocation>
        <location evidence="4">Nucleus</location>
    </subcellularLocation>
</comment>
<comment type="tissue specificity">
    <text>Detected in all the examined tissues with highest expression in liver, followed by heart, stomach, kidney, skeletal muscle, placenta, and pancreas.</text>
</comment>
<comment type="miscellaneous">
    <text>Overexpression in murine myeloid cell line 32Dcl3 causes G2/M arrest.</text>
</comment>
<comment type="similarity">
    <text evidence="6">Belongs to the SPIN/STSY family.</text>
</comment>